<accession>A5IMM2</accession>
<dbReference type="EC" id="6.1.1.17" evidence="1"/>
<dbReference type="EMBL" id="CP000702">
    <property type="protein sequence ID" value="ABQ47445.1"/>
    <property type="molecule type" value="Genomic_DNA"/>
</dbReference>
<dbReference type="RefSeq" id="WP_004081547.1">
    <property type="nucleotide sequence ID" value="NC_009486.1"/>
</dbReference>
<dbReference type="SMR" id="A5IMM2"/>
<dbReference type="STRING" id="390874.Tpet_1432"/>
<dbReference type="KEGG" id="tpt:Tpet_1432"/>
<dbReference type="eggNOG" id="COG0008">
    <property type="taxonomic scope" value="Bacteria"/>
</dbReference>
<dbReference type="HOGENOM" id="CLU_015768_6_3_0"/>
<dbReference type="Proteomes" id="UP000006558">
    <property type="component" value="Chromosome"/>
</dbReference>
<dbReference type="GO" id="GO:0005829">
    <property type="term" value="C:cytosol"/>
    <property type="evidence" value="ECO:0007669"/>
    <property type="project" value="TreeGrafter"/>
</dbReference>
<dbReference type="GO" id="GO:0005524">
    <property type="term" value="F:ATP binding"/>
    <property type="evidence" value="ECO:0007669"/>
    <property type="project" value="UniProtKB-UniRule"/>
</dbReference>
<dbReference type="GO" id="GO:0004818">
    <property type="term" value="F:glutamate-tRNA ligase activity"/>
    <property type="evidence" value="ECO:0007669"/>
    <property type="project" value="UniProtKB-UniRule"/>
</dbReference>
<dbReference type="GO" id="GO:0000049">
    <property type="term" value="F:tRNA binding"/>
    <property type="evidence" value="ECO:0007669"/>
    <property type="project" value="InterPro"/>
</dbReference>
<dbReference type="GO" id="GO:0008270">
    <property type="term" value="F:zinc ion binding"/>
    <property type="evidence" value="ECO:0007669"/>
    <property type="project" value="InterPro"/>
</dbReference>
<dbReference type="GO" id="GO:0006424">
    <property type="term" value="P:glutamyl-tRNA aminoacylation"/>
    <property type="evidence" value="ECO:0007669"/>
    <property type="project" value="UniProtKB-UniRule"/>
</dbReference>
<dbReference type="CDD" id="cd00808">
    <property type="entry name" value="GluRS_core"/>
    <property type="match status" value="1"/>
</dbReference>
<dbReference type="FunFam" id="1.10.8.70:FF:000003">
    <property type="entry name" value="Glutamate--tRNA ligase 1"/>
    <property type="match status" value="1"/>
</dbReference>
<dbReference type="FunFam" id="1.10.1160.10:FF:000003">
    <property type="entry name" value="Glutamate--tRNA ligase 2"/>
    <property type="match status" value="1"/>
</dbReference>
<dbReference type="FunFam" id="3.40.50.620:FF:000045">
    <property type="entry name" value="Glutamate--tRNA ligase, mitochondrial"/>
    <property type="match status" value="1"/>
</dbReference>
<dbReference type="Gene3D" id="1.10.10.350">
    <property type="match status" value="1"/>
</dbReference>
<dbReference type="Gene3D" id="1.10.8.70">
    <property type="entry name" value="Glutamate-tRNA synthetase, class I, anticodon-binding domain 1"/>
    <property type="match status" value="1"/>
</dbReference>
<dbReference type="Gene3D" id="1.10.1160.10">
    <property type="entry name" value="Glutamyl-trna Synthetase, Domain 2"/>
    <property type="match status" value="1"/>
</dbReference>
<dbReference type="Gene3D" id="3.90.800.10">
    <property type="entry name" value="Glutamyl-tRNA Synthetase, Domain 3"/>
    <property type="match status" value="1"/>
</dbReference>
<dbReference type="Gene3D" id="3.40.50.620">
    <property type="entry name" value="HUPs"/>
    <property type="match status" value="1"/>
</dbReference>
<dbReference type="HAMAP" id="MF_00022">
    <property type="entry name" value="Glu_tRNA_synth_type1"/>
    <property type="match status" value="1"/>
</dbReference>
<dbReference type="InterPro" id="IPR045462">
    <property type="entry name" value="aa-tRNA-synth_I_cd-bd"/>
</dbReference>
<dbReference type="InterPro" id="IPR020751">
    <property type="entry name" value="aa-tRNA-synth_I_codon-bd_sub2"/>
</dbReference>
<dbReference type="InterPro" id="IPR001412">
    <property type="entry name" value="aa-tRNA-synth_I_CS"/>
</dbReference>
<dbReference type="InterPro" id="IPR008925">
    <property type="entry name" value="aa_tRNA-synth_I_cd-bd_sf"/>
</dbReference>
<dbReference type="InterPro" id="IPR004527">
    <property type="entry name" value="Glu-tRNA-ligase_bac/mito"/>
</dbReference>
<dbReference type="InterPro" id="IPR020752">
    <property type="entry name" value="Glu-tRNA-synth_I_codon-bd_sub1"/>
</dbReference>
<dbReference type="InterPro" id="IPR000924">
    <property type="entry name" value="Glu/Gln-tRNA-synth"/>
</dbReference>
<dbReference type="InterPro" id="IPR020058">
    <property type="entry name" value="Glu/Gln-tRNA-synth_Ib_cat-dom"/>
</dbReference>
<dbReference type="InterPro" id="IPR020061">
    <property type="entry name" value="Glu_tRNA_lig_a-bdl"/>
</dbReference>
<dbReference type="InterPro" id="IPR049940">
    <property type="entry name" value="GluQ/Sye"/>
</dbReference>
<dbReference type="InterPro" id="IPR033910">
    <property type="entry name" value="GluRS_core"/>
</dbReference>
<dbReference type="InterPro" id="IPR014729">
    <property type="entry name" value="Rossmann-like_a/b/a_fold"/>
</dbReference>
<dbReference type="NCBIfam" id="TIGR00464">
    <property type="entry name" value="gltX_bact"/>
    <property type="match status" value="1"/>
</dbReference>
<dbReference type="PANTHER" id="PTHR43311">
    <property type="entry name" value="GLUTAMATE--TRNA LIGASE"/>
    <property type="match status" value="1"/>
</dbReference>
<dbReference type="PANTHER" id="PTHR43311:SF2">
    <property type="entry name" value="GLUTAMATE--TRNA LIGASE, MITOCHONDRIAL-RELATED"/>
    <property type="match status" value="1"/>
</dbReference>
<dbReference type="Pfam" id="PF19269">
    <property type="entry name" value="Anticodon_2"/>
    <property type="match status" value="1"/>
</dbReference>
<dbReference type="Pfam" id="PF00749">
    <property type="entry name" value="tRNA-synt_1c"/>
    <property type="match status" value="1"/>
</dbReference>
<dbReference type="PRINTS" id="PR00987">
    <property type="entry name" value="TRNASYNTHGLU"/>
</dbReference>
<dbReference type="SUPFAM" id="SSF48163">
    <property type="entry name" value="An anticodon-binding domain of class I aminoacyl-tRNA synthetases"/>
    <property type="match status" value="1"/>
</dbReference>
<dbReference type="SUPFAM" id="SSF52374">
    <property type="entry name" value="Nucleotidylyl transferase"/>
    <property type="match status" value="1"/>
</dbReference>
<dbReference type="PROSITE" id="PS00178">
    <property type="entry name" value="AA_TRNA_LIGASE_I"/>
    <property type="match status" value="1"/>
</dbReference>
<gene>
    <name evidence="1" type="primary">gltX2</name>
    <name type="ordered locus">Tpet_1432</name>
</gene>
<protein>
    <recommendedName>
        <fullName evidence="1">Glutamate--tRNA ligase 2</fullName>
        <ecNumber evidence="1">6.1.1.17</ecNumber>
    </recommendedName>
    <alternativeName>
        <fullName evidence="1">Glutamyl-tRNA synthetase 2</fullName>
        <shortName evidence="1">GluRS 2</shortName>
    </alternativeName>
</protein>
<proteinExistence type="inferred from homology"/>
<organism>
    <name type="scientific">Thermotoga petrophila (strain ATCC BAA-488 / DSM 13995 / JCM 10881 / RKU-1)</name>
    <dbReference type="NCBI Taxonomy" id="390874"/>
    <lineage>
        <taxon>Bacteria</taxon>
        <taxon>Thermotogati</taxon>
        <taxon>Thermotogota</taxon>
        <taxon>Thermotogae</taxon>
        <taxon>Thermotogales</taxon>
        <taxon>Thermotogaceae</taxon>
        <taxon>Thermotoga</taxon>
    </lineage>
</organism>
<comment type="function">
    <text evidence="1">Catalyzes the attachment of glutamate to tRNA(Glu) in a two-step reaction: glutamate is first activated by ATP to form Glu-AMP and then transferred to the acceptor end of tRNA(Glu).</text>
</comment>
<comment type="catalytic activity">
    <reaction evidence="1">
        <text>tRNA(Glu) + L-glutamate + ATP = L-glutamyl-tRNA(Glu) + AMP + diphosphate</text>
        <dbReference type="Rhea" id="RHEA:23540"/>
        <dbReference type="Rhea" id="RHEA-COMP:9663"/>
        <dbReference type="Rhea" id="RHEA-COMP:9680"/>
        <dbReference type="ChEBI" id="CHEBI:29985"/>
        <dbReference type="ChEBI" id="CHEBI:30616"/>
        <dbReference type="ChEBI" id="CHEBI:33019"/>
        <dbReference type="ChEBI" id="CHEBI:78442"/>
        <dbReference type="ChEBI" id="CHEBI:78520"/>
        <dbReference type="ChEBI" id="CHEBI:456215"/>
        <dbReference type="EC" id="6.1.1.17"/>
    </reaction>
</comment>
<comment type="subunit">
    <text evidence="1">Monomer.</text>
</comment>
<comment type="subcellular location">
    <subcellularLocation>
        <location evidence="1">Cytoplasm</location>
    </subcellularLocation>
</comment>
<comment type="similarity">
    <text evidence="1">Belongs to the class-I aminoacyl-tRNA synthetase family. Glutamate--tRNA ligase type 1 subfamily.</text>
</comment>
<evidence type="ECO:0000255" key="1">
    <source>
        <dbReference type="HAMAP-Rule" id="MF_00022"/>
    </source>
</evidence>
<sequence>MVRVRFAPSPTGFLHVGGARTALFNFLFARKEKGKFILRIEDTDLERSEREYEEKLMESLRWLGLLWDEGPDVGGDHGPYRQSERVEIYREHAERLVKEGKAYYVYAYPEEIEEMREKLLSEGKAPHYSQEMFEKFDTPERRREYEEKGLRPAVFFKMPRKDYVLNDVVKGEVVFKTGAIGDFVIMRSNGLPTYNFACVVDDMLMEITHVIRGDDHLSNTLRQLALYEAFEKAPPVFAHVSTILGPDGKKLSKRHGATSVEAFRDMGYLPEALVNYLALLGWSHPEGKELLTLEELISSFSLDRLSPNPAIFDPQKLKWMNGYYLRNMPIEKLAELAKPFFEKAGIKIIDEEYFKKVLEITKERVEVLSEFPEESRFFFEDPAPVEIPEEMKEVFSQLKEELQNVRWTMEEITPVFKKVLKQHGVKPKEFYMTLRRVLTGREEGPELVNIIPLLGKEIFLRRIERSLGG</sequence>
<name>SYE2_THEP1</name>
<feature type="chain" id="PRO_0000367791" description="Glutamate--tRNA ligase 2">
    <location>
        <begin position="1"/>
        <end position="469"/>
    </location>
</feature>
<feature type="short sequence motif" description="'HIGH' region" evidence="1">
    <location>
        <begin position="8"/>
        <end position="18"/>
    </location>
</feature>
<feature type="short sequence motif" description="'KMSKS' region" evidence="1">
    <location>
        <begin position="250"/>
        <end position="254"/>
    </location>
</feature>
<feature type="binding site" evidence="1">
    <location>
        <position position="253"/>
    </location>
    <ligand>
        <name>ATP</name>
        <dbReference type="ChEBI" id="CHEBI:30616"/>
    </ligand>
</feature>
<keyword id="KW-0030">Aminoacyl-tRNA synthetase</keyword>
<keyword id="KW-0067">ATP-binding</keyword>
<keyword id="KW-0963">Cytoplasm</keyword>
<keyword id="KW-0436">Ligase</keyword>
<keyword id="KW-0547">Nucleotide-binding</keyword>
<keyword id="KW-0648">Protein biosynthesis</keyword>
<reference key="1">
    <citation type="submission" date="2007-05" db="EMBL/GenBank/DDBJ databases">
        <title>Complete sequence of Thermotoga petrophila RKU-1.</title>
        <authorList>
            <consortium name="US DOE Joint Genome Institute"/>
            <person name="Copeland A."/>
            <person name="Lucas S."/>
            <person name="Lapidus A."/>
            <person name="Barry K."/>
            <person name="Glavina del Rio T."/>
            <person name="Dalin E."/>
            <person name="Tice H."/>
            <person name="Pitluck S."/>
            <person name="Sims D."/>
            <person name="Brettin T."/>
            <person name="Bruce D."/>
            <person name="Detter J.C."/>
            <person name="Han C."/>
            <person name="Tapia R."/>
            <person name="Schmutz J."/>
            <person name="Larimer F."/>
            <person name="Land M."/>
            <person name="Hauser L."/>
            <person name="Kyrpides N."/>
            <person name="Mikhailova N."/>
            <person name="Nelson K."/>
            <person name="Gogarten J.P."/>
            <person name="Noll K."/>
            <person name="Richardson P."/>
        </authorList>
    </citation>
    <scope>NUCLEOTIDE SEQUENCE [LARGE SCALE GENOMIC DNA]</scope>
    <source>
        <strain>ATCC BAA-488 / DSM 13995 / JCM 10881 / RKU-1</strain>
    </source>
</reference>